<reference key="1">
    <citation type="journal article" date="1999" name="Nature">
        <title>Sequence and analysis of chromosome 2 of the plant Arabidopsis thaliana.</title>
        <authorList>
            <person name="Lin X."/>
            <person name="Kaul S."/>
            <person name="Rounsley S.D."/>
            <person name="Shea T.P."/>
            <person name="Benito M.-I."/>
            <person name="Town C.D."/>
            <person name="Fujii C.Y."/>
            <person name="Mason T.M."/>
            <person name="Bowman C.L."/>
            <person name="Barnstead M.E."/>
            <person name="Feldblyum T.V."/>
            <person name="Buell C.R."/>
            <person name="Ketchum K.A."/>
            <person name="Lee J.J."/>
            <person name="Ronning C.M."/>
            <person name="Koo H.L."/>
            <person name="Moffat K.S."/>
            <person name="Cronin L.A."/>
            <person name="Shen M."/>
            <person name="Pai G."/>
            <person name="Van Aken S."/>
            <person name="Umayam L."/>
            <person name="Tallon L.J."/>
            <person name="Gill J.E."/>
            <person name="Adams M.D."/>
            <person name="Carrera A.J."/>
            <person name="Creasy T.H."/>
            <person name="Goodman H.M."/>
            <person name="Somerville C.R."/>
            <person name="Copenhaver G.P."/>
            <person name="Preuss D."/>
            <person name="Nierman W.C."/>
            <person name="White O."/>
            <person name="Eisen J.A."/>
            <person name="Salzberg S.L."/>
            <person name="Fraser C.M."/>
            <person name="Venter J.C."/>
        </authorList>
    </citation>
    <scope>NUCLEOTIDE SEQUENCE [LARGE SCALE GENOMIC DNA]</scope>
    <source>
        <strain>cv. Columbia</strain>
    </source>
</reference>
<reference key="2">
    <citation type="journal article" date="2017" name="Plant J.">
        <title>Araport11: a complete reannotation of the Arabidopsis thaliana reference genome.</title>
        <authorList>
            <person name="Cheng C.Y."/>
            <person name="Krishnakumar V."/>
            <person name="Chan A.P."/>
            <person name="Thibaud-Nissen F."/>
            <person name="Schobel S."/>
            <person name="Town C.D."/>
        </authorList>
    </citation>
    <scope>GENOME REANNOTATION</scope>
    <scope>SEQUENCE REVISION</scope>
    <source>
        <strain>cv. Columbia</strain>
    </source>
</reference>
<reference key="3">
    <citation type="journal article" date="2005" name="Plant Cell Physiol.">
        <title>Biochemical characterization of plasma membrane H+-ATPase activation in guard cell protoplasts of Arabidopsis thaliana in response to blue light.</title>
        <authorList>
            <person name="Ueno K."/>
            <person name="Kinoshita T."/>
            <person name="Inoue S."/>
            <person name="Emi T."/>
            <person name="Shimazaki K."/>
        </authorList>
    </citation>
    <scope>TISSUE SPECIFICITY</scope>
    <source>
        <strain>cv. Columbia GL1</strain>
    </source>
</reference>
<protein>
    <recommendedName>
        <fullName>ATPase 5, plasma membrane-type</fullName>
        <ecNumber>7.1.2.1</ecNumber>
    </recommendedName>
    <alternativeName>
        <fullName>Proton pump 5</fullName>
    </alternativeName>
</protein>
<name>PMA5_ARATH</name>
<sequence>MSELDHIKNESVDLVRIPMEEVFEELKCTKQGLTANEASHRLDVFGPNKLEEKKESKLLKFLGFMWNPLSWVMEVAALMAIALANGGGRPPDWQDFVGIVCLLLINSTISFIEENNAGNAAAALMAGLAPKTKVLRDNQWSEQEASILVPGDVISIKLGDIIPADARLLDGDPLKIDQSSLTGESIPVTKNPSDEVFSGSICKQGEIEAIVIATGVHTFFGKAAHLVDNTNQIGHFQKVLTSIGNFCICSIALGIIVELLVMYPIQRRRYRDGIDNLLVLLIGGIPIAMPSVLSVTMATGSHRLFQQGAITKRMTAIEEMAGMDVLCCDKTGTLTLNKLTVDKNLVEVFAKGVGKEHVFLLAARASRIENQDAIDAAIVGMLADPKEARAGVREVHFFPFNPVDKRTALTYVDSDGNWHRASKGAPEQILNLCNCKEDVRRKVHGVIDKFAERGLRSLAVARQEVLEKKKDAPGGPWQLVGLLPLFDPPRHDSAETIRRALNLGVNVKMITGDQLAIGKETGRRLGMGTNMYPSSALLGQVKDSSLGALPVDELIEKADGFAGVFPEHKYEIVHRLQQRNHICGMTGDGVNDAPALKKADIGIAVVDATDAARGASDIVLTEPGLSVIISAVLTSRAIFQRMKNYTIYAVSITIRIVFGFMFIALIWQFDFSPFMVLIIAILNDGTIMTISKDRMKPSPQPDSWKLRDIFSTGVVLGGYQALMTVVFFWVMKDSDFFSNYFGVRPLSQRPEQMMAALYLQVSIISQALIFVTRSRSWSYAECPGLLLLGAFVIAQLVATFIAVYANWSFARIEGAGWGWAGVIWLYSFLTYIPLDLLKFGIRYVLSGKAWLNLLENKTAFTTKKDYGKEEREAQWAAAQRTLHGLQPAEKNNIFNEKNSYSELSQIAEQAKRRAEVVRLREINTLKGHVESVVKLKGLDIDTIQQHYTV</sequence>
<proteinExistence type="evidence at transcript level"/>
<dbReference type="EC" id="7.1.2.1"/>
<dbReference type="EMBL" id="AC006954">
    <property type="protein sequence ID" value="AAD23893.1"/>
    <property type="status" value="ALT_SEQ"/>
    <property type="molecule type" value="Genomic_DNA"/>
</dbReference>
<dbReference type="EMBL" id="CP002685">
    <property type="protein sequence ID" value="AEC07588.1"/>
    <property type="status" value="ALT_SEQ"/>
    <property type="molecule type" value="Genomic_DNA"/>
</dbReference>
<dbReference type="PIR" id="F84637">
    <property type="entry name" value="F84637"/>
</dbReference>
<dbReference type="RefSeq" id="NP_001318282.1">
    <property type="nucleotide sequence ID" value="NM_001335933.1"/>
</dbReference>
<dbReference type="RefSeq" id="NP_180028.1">
    <property type="nucleotide sequence ID" value="NM_128013.2"/>
</dbReference>
<dbReference type="SMR" id="Q9SJB3"/>
<dbReference type="FunCoup" id="Q9SJB3">
    <property type="interactions" value="218"/>
</dbReference>
<dbReference type="STRING" id="3702.Q9SJB3"/>
<dbReference type="PaxDb" id="3702-AT2G24520.1"/>
<dbReference type="PeptideAtlas" id="Q9SJB3"/>
<dbReference type="GeneID" id="816988"/>
<dbReference type="KEGG" id="ath:AT2G24520"/>
<dbReference type="Araport" id="AT2G24520"/>
<dbReference type="TAIR" id="AT2G24520">
    <property type="gene designation" value="HA5"/>
</dbReference>
<dbReference type="eggNOG" id="KOG0205">
    <property type="taxonomic scope" value="Eukaryota"/>
</dbReference>
<dbReference type="HOGENOM" id="CLU_002360_6_4_1"/>
<dbReference type="InParanoid" id="Q9SJB3"/>
<dbReference type="PhylomeDB" id="Q9SJB3"/>
<dbReference type="PRO" id="PR:Q9SJB3"/>
<dbReference type="Proteomes" id="UP000006548">
    <property type="component" value="Chromosome 2"/>
</dbReference>
<dbReference type="ExpressionAtlas" id="Q9SJB3">
    <property type="expression patterns" value="baseline and differential"/>
</dbReference>
<dbReference type="GO" id="GO:0005886">
    <property type="term" value="C:plasma membrane"/>
    <property type="evidence" value="ECO:0000318"/>
    <property type="project" value="GO_Central"/>
</dbReference>
<dbReference type="GO" id="GO:0005524">
    <property type="term" value="F:ATP binding"/>
    <property type="evidence" value="ECO:0007669"/>
    <property type="project" value="UniProtKB-KW"/>
</dbReference>
<dbReference type="GO" id="GO:0016887">
    <property type="term" value="F:ATP hydrolysis activity"/>
    <property type="evidence" value="ECO:0007669"/>
    <property type="project" value="InterPro"/>
</dbReference>
<dbReference type="GO" id="GO:0046872">
    <property type="term" value="F:metal ion binding"/>
    <property type="evidence" value="ECO:0007669"/>
    <property type="project" value="UniProtKB-KW"/>
</dbReference>
<dbReference type="GO" id="GO:0008553">
    <property type="term" value="F:P-type proton-exporting transporter activity"/>
    <property type="evidence" value="ECO:0000318"/>
    <property type="project" value="GO_Central"/>
</dbReference>
<dbReference type="GO" id="GO:0120029">
    <property type="term" value="P:proton export across plasma membrane"/>
    <property type="evidence" value="ECO:0007669"/>
    <property type="project" value="InterPro"/>
</dbReference>
<dbReference type="GO" id="GO:1902600">
    <property type="term" value="P:proton transmembrane transport"/>
    <property type="evidence" value="ECO:0000318"/>
    <property type="project" value="GO_Central"/>
</dbReference>
<dbReference type="GO" id="GO:0051453">
    <property type="term" value="P:regulation of intracellular pH"/>
    <property type="evidence" value="ECO:0000318"/>
    <property type="project" value="GO_Central"/>
</dbReference>
<dbReference type="CDD" id="cd02076">
    <property type="entry name" value="P-type_ATPase_H"/>
    <property type="match status" value="1"/>
</dbReference>
<dbReference type="FunFam" id="1.20.1110.10:FF:000045">
    <property type="entry name" value="ATPase 4 plasma membrane-type"/>
    <property type="match status" value="1"/>
</dbReference>
<dbReference type="FunFam" id="2.70.150.10:FF:000004">
    <property type="entry name" value="Plasma membrane ATPase"/>
    <property type="match status" value="1"/>
</dbReference>
<dbReference type="FunFam" id="3.40.1110.10:FF:000004">
    <property type="entry name" value="Plasma membrane ATPase"/>
    <property type="match status" value="1"/>
</dbReference>
<dbReference type="FunFam" id="3.40.50.1000:FF:000211">
    <property type="entry name" value="Plasma membrane ATPase"/>
    <property type="match status" value="1"/>
</dbReference>
<dbReference type="Gene3D" id="6.10.140.890">
    <property type="match status" value="1"/>
</dbReference>
<dbReference type="Gene3D" id="3.40.1110.10">
    <property type="entry name" value="Calcium-transporting ATPase, cytoplasmic domain N"/>
    <property type="match status" value="1"/>
</dbReference>
<dbReference type="Gene3D" id="2.70.150.10">
    <property type="entry name" value="Calcium-transporting ATPase, cytoplasmic transduction domain A"/>
    <property type="match status" value="1"/>
</dbReference>
<dbReference type="Gene3D" id="1.20.1110.10">
    <property type="entry name" value="Calcium-transporting ATPase, transmembrane domain"/>
    <property type="match status" value="1"/>
</dbReference>
<dbReference type="Gene3D" id="3.40.50.1000">
    <property type="entry name" value="HAD superfamily/HAD-like"/>
    <property type="match status" value="1"/>
</dbReference>
<dbReference type="InterPro" id="IPR004014">
    <property type="entry name" value="ATPase_P-typ_cation-transptr_N"/>
</dbReference>
<dbReference type="InterPro" id="IPR023299">
    <property type="entry name" value="ATPase_P-typ_cyto_dom_N"/>
</dbReference>
<dbReference type="InterPro" id="IPR018303">
    <property type="entry name" value="ATPase_P-typ_P_site"/>
</dbReference>
<dbReference type="InterPro" id="IPR023298">
    <property type="entry name" value="ATPase_P-typ_TM_dom_sf"/>
</dbReference>
<dbReference type="InterPro" id="IPR008250">
    <property type="entry name" value="ATPase_P-typ_transduc_dom_A_sf"/>
</dbReference>
<dbReference type="InterPro" id="IPR036412">
    <property type="entry name" value="HAD-like_sf"/>
</dbReference>
<dbReference type="InterPro" id="IPR023214">
    <property type="entry name" value="HAD_sf"/>
</dbReference>
<dbReference type="InterPro" id="IPR006534">
    <property type="entry name" value="P-type_ATPase_IIIA"/>
</dbReference>
<dbReference type="InterPro" id="IPR001757">
    <property type="entry name" value="P_typ_ATPase"/>
</dbReference>
<dbReference type="InterPro" id="IPR044492">
    <property type="entry name" value="P_typ_ATPase_HD_dom"/>
</dbReference>
<dbReference type="NCBIfam" id="TIGR01647">
    <property type="entry name" value="ATPase-IIIA_H"/>
    <property type="match status" value="1"/>
</dbReference>
<dbReference type="NCBIfam" id="TIGR01494">
    <property type="entry name" value="ATPase_P-type"/>
    <property type="match status" value="2"/>
</dbReference>
<dbReference type="PANTHER" id="PTHR42861">
    <property type="entry name" value="CALCIUM-TRANSPORTING ATPASE"/>
    <property type="match status" value="1"/>
</dbReference>
<dbReference type="Pfam" id="PF00690">
    <property type="entry name" value="Cation_ATPase_N"/>
    <property type="match status" value="1"/>
</dbReference>
<dbReference type="Pfam" id="PF00122">
    <property type="entry name" value="E1-E2_ATPase"/>
    <property type="match status" value="1"/>
</dbReference>
<dbReference type="Pfam" id="PF00702">
    <property type="entry name" value="Hydrolase"/>
    <property type="match status" value="1"/>
</dbReference>
<dbReference type="PRINTS" id="PR00119">
    <property type="entry name" value="CATATPASE"/>
</dbReference>
<dbReference type="PRINTS" id="PR00120">
    <property type="entry name" value="HATPASE"/>
</dbReference>
<dbReference type="SFLD" id="SFLDG00002">
    <property type="entry name" value="C1.7:_P-type_atpase_like"/>
    <property type="match status" value="1"/>
</dbReference>
<dbReference type="SFLD" id="SFLDF00027">
    <property type="entry name" value="p-type_atpase"/>
    <property type="match status" value="1"/>
</dbReference>
<dbReference type="SMART" id="SM00831">
    <property type="entry name" value="Cation_ATPase_N"/>
    <property type="match status" value="1"/>
</dbReference>
<dbReference type="SUPFAM" id="SSF81653">
    <property type="entry name" value="Calcium ATPase, transduction domain A"/>
    <property type="match status" value="1"/>
</dbReference>
<dbReference type="SUPFAM" id="SSF81665">
    <property type="entry name" value="Calcium ATPase, transmembrane domain M"/>
    <property type="match status" value="1"/>
</dbReference>
<dbReference type="SUPFAM" id="SSF56784">
    <property type="entry name" value="HAD-like"/>
    <property type="match status" value="1"/>
</dbReference>
<dbReference type="PROSITE" id="PS00154">
    <property type="entry name" value="ATPASE_E1_E2"/>
    <property type="match status" value="1"/>
</dbReference>
<feature type="initiator methionine" description="Removed" evidence="2">
    <location>
        <position position="1"/>
    </location>
</feature>
<feature type="chain" id="PRO_0000046278" description="ATPase 5, plasma membrane-type">
    <location>
        <begin position="2"/>
        <end position="949"/>
    </location>
</feature>
<feature type="topological domain" description="Cytoplasmic" evidence="4">
    <location>
        <begin position="2"/>
        <end position="61"/>
    </location>
</feature>
<feature type="transmembrane region" description="Helical; Name=1" evidence="4">
    <location>
        <begin position="62"/>
        <end position="81"/>
    </location>
</feature>
<feature type="topological domain" description="Extracellular" evidence="4">
    <location>
        <begin position="82"/>
        <end position="93"/>
    </location>
</feature>
<feature type="transmembrane region" description="Helical; Name=2" evidence="4">
    <location>
        <begin position="94"/>
        <end position="114"/>
    </location>
</feature>
<feature type="topological domain" description="Cytoplasmic" evidence="4">
    <location>
        <begin position="115"/>
        <end position="243"/>
    </location>
</feature>
<feature type="transmembrane region" description="Helical; Name=3" evidence="4">
    <location>
        <begin position="244"/>
        <end position="264"/>
    </location>
</feature>
<feature type="topological domain" description="Extracellular" evidence="4">
    <location>
        <begin position="265"/>
        <end position="273"/>
    </location>
</feature>
<feature type="transmembrane region" description="Helical; Name=4" evidence="4">
    <location>
        <begin position="274"/>
        <end position="291"/>
    </location>
</feature>
<feature type="topological domain" description="Cytoplasmic" evidence="4">
    <location>
        <begin position="292"/>
        <end position="643"/>
    </location>
</feature>
<feature type="transmembrane region" description="Helical; Name=5" evidence="4">
    <location>
        <begin position="644"/>
        <end position="665"/>
    </location>
</feature>
<feature type="topological domain" description="Extracellular" evidence="4">
    <location>
        <begin position="666"/>
        <end position="670"/>
    </location>
</feature>
<feature type="transmembrane region" description="Helical; Name=6" evidence="4">
    <location>
        <begin position="671"/>
        <end position="693"/>
    </location>
</feature>
<feature type="topological domain" description="Cytoplasmic" evidence="4">
    <location>
        <begin position="694"/>
        <end position="709"/>
    </location>
</feature>
<feature type="transmembrane region" description="Helical; Name=7" evidence="4">
    <location>
        <begin position="710"/>
        <end position="730"/>
    </location>
</feature>
<feature type="topological domain" description="Extracellular" evidence="4">
    <location>
        <begin position="731"/>
        <end position="751"/>
    </location>
</feature>
<feature type="transmembrane region" description="Helical; Name=8" evidence="4">
    <location>
        <begin position="752"/>
        <end position="772"/>
    </location>
</feature>
<feature type="topological domain" description="Cytoplasmic" evidence="4">
    <location>
        <begin position="773"/>
        <end position="784"/>
    </location>
</feature>
<feature type="transmembrane region" description="Helical; Name=9" evidence="4">
    <location>
        <begin position="785"/>
        <end position="805"/>
    </location>
</feature>
<feature type="topological domain" description="Extracellular" evidence="4">
    <location>
        <begin position="806"/>
        <end position="813"/>
    </location>
</feature>
<feature type="transmembrane region" description="Helical; Name=10" evidence="4">
    <location>
        <begin position="814"/>
        <end position="834"/>
    </location>
</feature>
<feature type="topological domain" description="Cytoplasmic" evidence="4">
    <location>
        <begin position="835"/>
        <end position="949"/>
    </location>
</feature>
<feature type="region of interest" description="Interaction with 14-3-3 proteins" evidence="1">
    <location>
        <begin position="947"/>
        <end position="949"/>
    </location>
</feature>
<feature type="active site" description="4-aspartylphosphate intermediate" evidence="1">
    <location>
        <position position="329"/>
    </location>
</feature>
<feature type="binding site" evidence="1">
    <location>
        <position position="588"/>
    </location>
    <ligand>
        <name>Mg(2+)</name>
        <dbReference type="ChEBI" id="CHEBI:18420"/>
    </ligand>
</feature>
<feature type="binding site" evidence="1">
    <location>
        <position position="592"/>
    </location>
    <ligand>
        <name>Mg(2+)</name>
        <dbReference type="ChEBI" id="CHEBI:18420"/>
    </ligand>
</feature>
<feature type="modified residue" description="N-acetylserine" evidence="2">
    <location>
        <position position="2"/>
    </location>
</feature>
<feature type="modified residue" description="Phosphothreonine" evidence="3">
    <location>
        <position position="881"/>
    </location>
</feature>
<feature type="modified residue" description="Phosphoserine" evidence="2">
    <location>
        <position position="899"/>
    </location>
</feature>
<feature type="modified residue" description="Phosphoserine" evidence="2">
    <location>
        <position position="931"/>
    </location>
</feature>
<feature type="modified residue" description="Phosphothreonine" evidence="3">
    <location>
        <position position="948"/>
    </location>
</feature>
<feature type="sequence conflict" description="In Ref. 1; AAD23893 and 2; AEC07588." evidence="6" ref="1 2">
    <original>M</original>
    <variation>G</variation>
    <location>
        <position position="1"/>
    </location>
</feature>
<accession>Q9SJB3</accession>
<accession>F4IPQ2</accession>
<keyword id="KW-0007">Acetylation</keyword>
<keyword id="KW-0067">ATP-binding</keyword>
<keyword id="KW-0375">Hydrogen ion transport</keyword>
<keyword id="KW-0406">Ion transport</keyword>
<keyword id="KW-0460">Magnesium</keyword>
<keyword id="KW-0472">Membrane</keyword>
<keyword id="KW-0479">Metal-binding</keyword>
<keyword id="KW-0547">Nucleotide-binding</keyword>
<keyword id="KW-0597">Phosphoprotein</keyword>
<keyword id="KW-1185">Reference proteome</keyword>
<keyword id="KW-1278">Translocase</keyword>
<keyword id="KW-0812">Transmembrane</keyword>
<keyword id="KW-1133">Transmembrane helix</keyword>
<keyword id="KW-0813">Transport</keyword>
<comment type="function">
    <text evidence="1">The plasma membrane H(+) ATPase of plants and fungi generates a proton gradient that drives the active transport of nutrients by H(+)-symport. The resulting external acidification and/or internal alkinization may mediate growth responses (By similarity).</text>
</comment>
<comment type="catalytic activity">
    <reaction>
        <text>ATP + H2O + H(+)(in) = ADP + phosphate + 2 H(+)(out)</text>
        <dbReference type="Rhea" id="RHEA:20852"/>
        <dbReference type="ChEBI" id="CHEBI:15377"/>
        <dbReference type="ChEBI" id="CHEBI:15378"/>
        <dbReference type="ChEBI" id="CHEBI:30616"/>
        <dbReference type="ChEBI" id="CHEBI:43474"/>
        <dbReference type="ChEBI" id="CHEBI:456216"/>
        <dbReference type="EC" id="7.1.2.1"/>
    </reaction>
</comment>
<comment type="subunit">
    <text evidence="1">Binds to 14-3-3 proteins. The binding is induced by phosphorylation of Thr-948. Binding to 14-3-3 proteins activates the H(+)-ATPase (By similarity).</text>
</comment>
<comment type="subcellular location">
    <subcellularLocation>
        <location>Membrane</location>
        <topology>Multi-pass membrane protein</topology>
    </subcellularLocation>
</comment>
<comment type="tissue specificity">
    <text evidence="5">Expressed in guard cells and leaves.</text>
</comment>
<comment type="similarity">
    <text evidence="6">Belongs to the cation transport ATPase (P-type) (TC 3.A.3) family. Type IIIA subfamily.</text>
</comment>
<comment type="sequence caution" evidence="6">
    <conflict type="erroneous gene model prediction">
        <sequence resource="EMBL-CDS" id="AAD23893"/>
    </conflict>
</comment>
<comment type="sequence caution" evidence="6">
    <conflict type="erroneous gene model prediction">
        <sequence resource="EMBL-CDS" id="AEC07588"/>
    </conflict>
</comment>
<evidence type="ECO:0000250" key="1"/>
<evidence type="ECO:0000250" key="2">
    <source>
        <dbReference type="UniProtKB" id="P19456"/>
    </source>
</evidence>
<evidence type="ECO:0000250" key="3">
    <source>
        <dbReference type="UniProtKB" id="P20431"/>
    </source>
</evidence>
<evidence type="ECO:0000255" key="4"/>
<evidence type="ECO:0000269" key="5">
    <source>
    </source>
</evidence>
<evidence type="ECO:0000305" key="6"/>
<gene>
    <name type="primary">AHA5</name>
    <name type="ordered locus">At2g24520</name>
    <name type="ORF">F25P17.18</name>
</gene>
<organism>
    <name type="scientific">Arabidopsis thaliana</name>
    <name type="common">Mouse-ear cress</name>
    <dbReference type="NCBI Taxonomy" id="3702"/>
    <lineage>
        <taxon>Eukaryota</taxon>
        <taxon>Viridiplantae</taxon>
        <taxon>Streptophyta</taxon>
        <taxon>Embryophyta</taxon>
        <taxon>Tracheophyta</taxon>
        <taxon>Spermatophyta</taxon>
        <taxon>Magnoliopsida</taxon>
        <taxon>eudicotyledons</taxon>
        <taxon>Gunneridae</taxon>
        <taxon>Pentapetalae</taxon>
        <taxon>rosids</taxon>
        <taxon>malvids</taxon>
        <taxon>Brassicales</taxon>
        <taxon>Brassicaceae</taxon>
        <taxon>Camelineae</taxon>
        <taxon>Arabidopsis</taxon>
    </lineage>
</organism>